<accession>Q2FY33</accession>
<sequence length="363" mass="40458">MSSDLKQTPLYQNYVDRGAKIVEFGGWAMPVQFSSIKEEHNAVRYEIGLFDVSHMGEIEVTGKDASQFVQYLLSNDTDNLTTSKALYTALCNEEGGIIDDLVIYKLADDNYLLVVNAANTEKDFNWILKHKEKFDVEVQNVSNQYGQLAIQGPKARDLINQLVDEDVTEMKMFEFKQGVKLFGANVILSQSGYTGEDGFEIYCNIDDTEKIWDGLLEYNVMPCGLGARDTLRLEAGLPLHGQDLTESITPYEGGIAFASKPLIDADFIGKSVLKDQKENGAPRRTVGLELLEKGIARTGYEVMDLDGNIIGEVTSGTQSPSSGKSIALAMIKRDEFEMGRELLVQVRKRQLKAKIVKKNQIDK</sequence>
<protein>
    <recommendedName>
        <fullName evidence="1">Aminomethyltransferase</fullName>
        <ecNumber evidence="1">2.1.2.10</ecNumber>
    </recommendedName>
    <alternativeName>
        <fullName evidence="1">Glycine cleavage system T protein</fullName>
    </alternativeName>
</protein>
<evidence type="ECO:0000255" key="1">
    <source>
        <dbReference type="HAMAP-Rule" id="MF_00259"/>
    </source>
</evidence>
<gene>
    <name evidence="1" type="primary">gcvT</name>
    <name type="ordered locus">SAOUHSC_01634</name>
</gene>
<feature type="chain" id="PRO_1000047715" description="Aminomethyltransferase">
    <location>
        <begin position="1"/>
        <end position="363"/>
    </location>
</feature>
<comment type="function">
    <text evidence="1">The glycine cleavage system catalyzes the degradation of glycine.</text>
</comment>
<comment type="catalytic activity">
    <reaction evidence="1">
        <text>N(6)-[(R)-S(8)-aminomethyldihydrolipoyl]-L-lysyl-[protein] + (6S)-5,6,7,8-tetrahydrofolate = N(6)-[(R)-dihydrolipoyl]-L-lysyl-[protein] + (6R)-5,10-methylene-5,6,7,8-tetrahydrofolate + NH4(+)</text>
        <dbReference type="Rhea" id="RHEA:16945"/>
        <dbReference type="Rhea" id="RHEA-COMP:10475"/>
        <dbReference type="Rhea" id="RHEA-COMP:10492"/>
        <dbReference type="ChEBI" id="CHEBI:15636"/>
        <dbReference type="ChEBI" id="CHEBI:28938"/>
        <dbReference type="ChEBI" id="CHEBI:57453"/>
        <dbReference type="ChEBI" id="CHEBI:83100"/>
        <dbReference type="ChEBI" id="CHEBI:83143"/>
        <dbReference type="EC" id="2.1.2.10"/>
    </reaction>
</comment>
<comment type="subunit">
    <text evidence="1">The glycine cleavage system is composed of four proteins: P, T, L and H.</text>
</comment>
<comment type="similarity">
    <text evidence="1">Belongs to the GcvT family.</text>
</comment>
<name>GCST_STAA8</name>
<proteinExistence type="inferred from homology"/>
<organism>
    <name type="scientific">Staphylococcus aureus (strain NCTC 8325 / PS 47)</name>
    <dbReference type="NCBI Taxonomy" id="93061"/>
    <lineage>
        <taxon>Bacteria</taxon>
        <taxon>Bacillati</taxon>
        <taxon>Bacillota</taxon>
        <taxon>Bacilli</taxon>
        <taxon>Bacillales</taxon>
        <taxon>Staphylococcaceae</taxon>
        <taxon>Staphylococcus</taxon>
    </lineage>
</organism>
<keyword id="KW-0032">Aminotransferase</keyword>
<keyword id="KW-1185">Reference proteome</keyword>
<keyword id="KW-0808">Transferase</keyword>
<dbReference type="EC" id="2.1.2.10" evidence="1"/>
<dbReference type="EMBL" id="CP000253">
    <property type="protein sequence ID" value="ABD30711.1"/>
    <property type="molecule type" value="Genomic_DNA"/>
</dbReference>
<dbReference type="RefSeq" id="WP_000093349.1">
    <property type="nucleotide sequence ID" value="NZ_LS483365.1"/>
</dbReference>
<dbReference type="RefSeq" id="YP_500147.1">
    <property type="nucleotide sequence ID" value="NC_007795.1"/>
</dbReference>
<dbReference type="SMR" id="Q2FY33"/>
<dbReference type="STRING" id="93061.SAOUHSC_01634"/>
<dbReference type="PaxDb" id="1280-SAXN108_1560"/>
<dbReference type="GeneID" id="3919971"/>
<dbReference type="KEGG" id="sao:SAOUHSC_01634"/>
<dbReference type="PATRIC" id="fig|93061.5.peg.1487"/>
<dbReference type="eggNOG" id="COG0404">
    <property type="taxonomic scope" value="Bacteria"/>
</dbReference>
<dbReference type="HOGENOM" id="CLU_007884_10_2_9"/>
<dbReference type="OrthoDB" id="9774591at2"/>
<dbReference type="PRO" id="PR:Q2FY33"/>
<dbReference type="Proteomes" id="UP000008816">
    <property type="component" value="Chromosome"/>
</dbReference>
<dbReference type="GO" id="GO:0005829">
    <property type="term" value="C:cytosol"/>
    <property type="evidence" value="ECO:0000318"/>
    <property type="project" value="GO_Central"/>
</dbReference>
<dbReference type="GO" id="GO:0005960">
    <property type="term" value="C:glycine cleavage complex"/>
    <property type="evidence" value="ECO:0007669"/>
    <property type="project" value="InterPro"/>
</dbReference>
<dbReference type="GO" id="GO:0004047">
    <property type="term" value="F:aminomethyltransferase activity"/>
    <property type="evidence" value="ECO:0007669"/>
    <property type="project" value="UniProtKB-UniRule"/>
</dbReference>
<dbReference type="GO" id="GO:0008483">
    <property type="term" value="F:transaminase activity"/>
    <property type="evidence" value="ECO:0007669"/>
    <property type="project" value="UniProtKB-KW"/>
</dbReference>
<dbReference type="GO" id="GO:0019464">
    <property type="term" value="P:glycine decarboxylation via glycine cleavage system"/>
    <property type="evidence" value="ECO:0007669"/>
    <property type="project" value="UniProtKB-UniRule"/>
</dbReference>
<dbReference type="FunFam" id="2.40.30.110:FF:000007">
    <property type="entry name" value="Aminomethyltransferase"/>
    <property type="match status" value="1"/>
</dbReference>
<dbReference type="FunFam" id="3.30.70.1400:FF:000001">
    <property type="entry name" value="Aminomethyltransferase"/>
    <property type="match status" value="1"/>
</dbReference>
<dbReference type="FunFam" id="4.10.1250.10:FF:000001">
    <property type="entry name" value="Aminomethyltransferase"/>
    <property type="match status" value="1"/>
</dbReference>
<dbReference type="Gene3D" id="2.40.30.110">
    <property type="entry name" value="Aminomethyltransferase beta-barrel domains"/>
    <property type="match status" value="1"/>
</dbReference>
<dbReference type="Gene3D" id="3.30.70.1400">
    <property type="entry name" value="Aminomethyltransferase beta-barrel domains"/>
    <property type="match status" value="1"/>
</dbReference>
<dbReference type="Gene3D" id="4.10.1250.10">
    <property type="entry name" value="Aminomethyltransferase fragment"/>
    <property type="match status" value="1"/>
</dbReference>
<dbReference type="Gene3D" id="3.30.1360.120">
    <property type="entry name" value="Probable tRNA modification gtpase trme, domain 1"/>
    <property type="match status" value="1"/>
</dbReference>
<dbReference type="HAMAP" id="MF_00259">
    <property type="entry name" value="GcvT"/>
    <property type="match status" value="1"/>
</dbReference>
<dbReference type="InterPro" id="IPR006223">
    <property type="entry name" value="GCS_T"/>
</dbReference>
<dbReference type="InterPro" id="IPR022903">
    <property type="entry name" value="GCS_T_bac"/>
</dbReference>
<dbReference type="InterPro" id="IPR013977">
    <property type="entry name" value="GCST_C"/>
</dbReference>
<dbReference type="InterPro" id="IPR006222">
    <property type="entry name" value="GCV_T_N"/>
</dbReference>
<dbReference type="InterPro" id="IPR028896">
    <property type="entry name" value="GcvT/YgfZ/DmdA"/>
</dbReference>
<dbReference type="InterPro" id="IPR029043">
    <property type="entry name" value="GcvT/YgfZ_C"/>
</dbReference>
<dbReference type="InterPro" id="IPR027266">
    <property type="entry name" value="TrmE/GcvT_dom1"/>
</dbReference>
<dbReference type="NCBIfam" id="TIGR00528">
    <property type="entry name" value="gcvT"/>
    <property type="match status" value="1"/>
</dbReference>
<dbReference type="NCBIfam" id="NF001567">
    <property type="entry name" value="PRK00389.1"/>
    <property type="match status" value="1"/>
</dbReference>
<dbReference type="PANTHER" id="PTHR43757">
    <property type="entry name" value="AMINOMETHYLTRANSFERASE"/>
    <property type="match status" value="1"/>
</dbReference>
<dbReference type="PANTHER" id="PTHR43757:SF2">
    <property type="entry name" value="AMINOMETHYLTRANSFERASE, MITOCHONDRIAL"/>
    <property type="match status" value="1"/>
</dbReference>
<dbReference type="Pfam" id="PF01571">
    <property type="entry name" value="GCV_T"/>
    <property type="match status" value="1"/>
</dbReference>
<dbReference type="Pfam" id="PF08669">
    <property type="entry name" value="GCV_T_C"/>
    <property type="match status" value="1"/>
</dbReference>
<dbReference type="PIRSF" id="PIRSF006487">
    <property type="entry name" value="GcvT"/>
    <property type="match status" value="1"/>
</dbReference>
<dbReference type="SUPFAM" id="SSF101790">
    <property type="entry name" value="Aminomethyltransferase beta-barrel domain"/>
    <property type="match status" value="1"/>
</dbReference>
<dbReference type="SUPFAM" id="SSF103025">
    <property type="entry name" value="Folate-binding domain"/>
    <property type="match status" value="1"/>
</dbReference>
<reference key="1">
    <citation type="book" date="2006" name="Gram positive pathogens, 2nd edition">
        <title>The Staphylococcus aureus NCTC 8325 genome.</title>
        <editorList>
            <person name="Fischetti V."/>
            <person name="Novick R."/>
            <person name="Ferretti J."/>
            <person name="Portnoy D."/>
            <person name="Rood J."/>
        </editorList>
        <authorList>
            <person name="Gillaspy A.F."/>
            <person name="Worrell V."/>
            <person name="Orvis J."/>
            <person name="Roe B.A."/>
            <person name="Dyer D.W."/>
            <person name="Iandolo J.J."/>
        </authorList>
    </citation>
    <scope>NUCLEOTIDE SEQUENCE [LARGE SCALE GENOMIC DNA]</scope>
    <source>
        <strain>NCTC 8325 / PS 47</strain>
    </source>
</reference>